<proteinExistence type="evidence at protein level"/>
<evidence type="ECO:0000269" key="1">
    <source>
    </source>
</evidence>
<evidence type="ECO:0000269" key="2">
    <source>
    </source>
</evidence>
<evidence type="ECO:0000303" key="3">
    <source>
    </source>
</evidence>
<evidence type="ECO:0007829" key="4">
    <source>
        <dbReference type="PDB" id="1OTG"/>
    </source>
</evidence>
<sequence>MPHFIVECSDNIREEADLPGLFAKVNPTLAATGIFPLAGIRSRVHWVDTWQMADGQHDYASVHMTLKIGAGRSLESRQQAGEMLFELIKTHFAALMESRLLALSFEIEELHPTLNFKQNNVHALFK</sequence>
<name>HPCD_ECOLX</name>
<accession>Q05354</accession>
<gene>
    <name type="primary">hpcD</name>
</gene>
<keyword id="KW-0002">3D-structure</keyword>
<keyword id="KW-0058">Aromatic hydrocarbons catabolism</keyword>
<keyword id="KW-0903">Direct protein sequencing</keyword>
<keyword id="KW-0413">Isomerase</keyword>
<reference key="1">
    <citation type="journal article" date="1990" name="FEBS Lett.">
        <title>Purification, some properties and nucleotide sequence of 5-carboxymethyl-2-hydroxymuconate isomerase of Escherichia coli C.</title>
        <authorList>
            <person name="Roper D.I."/>
            <person name="Cooper R.A."/>
        </authorList>
    </citation>
    <scope>NUCLEOTIDE SEQUENCE [GENOMIC DNA]</scope>
    <scope>PROTEIN SEQUENCE OF 2-20</scope>
    <scope>FUNCTION</scope>
    <scope>CATALYTIC ACTIVITY</scope>
    <scope>BIOPHYSICOCHEMICAL PROPERTIES</scope>
    <source>
        <strain>C</strain>
    </source>
</reference>
<reference key="2">
    <citation type="journal article" date="1990" name="FEBS Lett.">
        <title>Subcloning and nucleotide sequence of the 3,4-dihydroxyphenylacetate (homoprotocatechuate) 2,3-dioxygenase gene from Escherichia coli C.</title>
        <authorList>
            <person name="Roper D.I."/>
            <person name="Cooper R.A."/>
        </authorList>
    </citation>
    <scope>NUCLEOTIDE SEQUENCE [GENOMIC DNA] OF 1-6</scope>
    <source>
        <strain>C</strain>
    </source>
</reference>
<reference key="3">
    <citation type="journal article" date="1996" name="Biochemistry">
        <title>Enzymatic ketonization of 2-hydroxymuconate: specificity and mechanism investigated by the crystal structures of two isomerases.</title>
        <authorList>
            <person name="Subramanya H.S."/>
            <person name="Roper D.I."/>
            <person name="Dauter Z."/>
            <person name="Dodson E.J."/>
            <person name="Davies G.J."/>
            <person name="Wilson K.S."/>
            <person name="Wigley D.B."/>
        </authorList>
    </citation>
    <scope>X-RAY CRYSTALLOGRAPHY (2.1 ANGSTROMS)</scope>
    <scope>SUBUNIT</scope>
</reference>
<feature type="initiator methionine" description="Removed" evidence="1">
    <location>
        <position position="1"/>
    </location>
</feature>
<feature type="chain" id="PRO_0000084041" description="5-carboxymethyl-2-hydroxymuconate Delta-isomerase">
    <location>
        <begin position="2"/>
        <end position="126"/>
    </location>
</feature>
<feature type="active site" description="Proton acceptor; via imino nitrogen">
    <location>
        <position position="2"/>
    </location>
</feature>
<feature type="strand" evidence="4">
    <location>
        <begin position="3"/>
        <end position="9"/>
    </location>
</feature>
<feature type="helix" evidence="4">
    <location>
        <begin position="10"/>
        <end position="12"/>
    </location>
</feature>
<feature type="helix" evidence="4">
    <location>
        <begin position="13"/>
        <end position="16"/>
    </location>
</feature>
<feature type="helix" evidence="4">
    <location>
        <begin position="18"/>
        <end position="30"/>
    </location>
</feature>
<feature type="strand" evidence="4">
    <location>
        <begin position="33"/>
        <end position="35"/>
    </location>
</feature>
<feature type="helix" evidence="4">
    <location>
        <begin position="37"/>
        <end position="39"/>
    </location>
</feature>
<feature type="strand" evidence="4">
    <location>
        <begin position="41"/>
        <end position="52"/>
    </location>
</feature>
<feature type="strand" evidence="4">
    <location>
        <begin position="59"/>
        <end position="68"/>
    </location>
</feature>
<feature type="helix" evidence="4">
    <location>
        <begin position="74"/>
        <end position="91"/>
    </location>
</feature>
<feature type="helix" evidence="4">
    <location>
        <begin position="93"/>
        <end position="96"/>
    </location>
</feature>
<feature type="strand" evidence="4">
    <location>
        <begin position="99"/>
        <end position="109"/>
    </location>
</feature>
<feature type="strand" evidence="4">
    <location>
        <begin position="112"/>
        <end position="119"/>
    </location>
</feature>
<feature type="helix" evidence="4">
    <location>
        <begin position="120"/>
        <end position="124"/>
    </location>
</feature>
<organism>
    <name type="scientific">Escherichia coli</name>
    <dbReference type="NCBI Taxonomy" id="562"/>
    <lineage>
        <taxon>Bacteria</taxon>
        <taxon>Pseudomonadati</taxon>
        <taxon>Pseudomonadota</taxon>
        <taxon>Gammaproteobacteria</taxon>
        <taxon>Enterobacterales</taxon>
        <taxon>Enterobacteriaceae</taxon>
        <taxon>Escherichia</taxon>
    </lineage>
</organism>
<dbReference type="EC" id="5.3.3.10" evidence="1"/>
<dbReference type="EMBL" id="X53666">
    <property type="protein sequence ID" value="CAA37707.1"/>
    <property type="molecule type" value="Genomic_DNA"/>
</dbReference>
<dbReference type="EMBL" id="X55200">
    <property type="protein sequence ID" value="CAA38986.1"/>
    <property type="molecule type" value="Genomic_DNA"/>
</dbReference>
<dbReference type="PDB" id="1OTG">
    <property type="method" value="X-ray"/>
    <property type="resolution" value="2.10 A"/>
    <property type="chains" value="A/B/C=2-126"/>
</dbReference>
<dbReference type="PDBsum" id="1OTG"/>
<dbReference type="SMR" id="Q05354"/>
<dbReference type="STRING" id="585034.ECIAI1_4572"/>
<dbReference type="UniPathway" id="UPA00208">
    <property type="reaction ID" value="UER00419"/>
</dbReference>
<dbReference type="EvolutionaryTrace" id="Q05354"/>
<dbReference type="GO" id="GO:0008704">
    <property type="term" value="F:5-carboxymethyl-2-hydroxymuconate delta-isomerase activity"/>
    <property type="evidence" value="ECO:0007669"/>
    <property type="project" value="UniProtKB-EC"/>
</dbReference>
<dbReference type="GO" id="GO:0009056">
    <property type="term" value="P:catabolic process"/>
    <property type="evidence" value="ECO:0007669"/>
    <property type="project" value="UniProtKB-KW"/>
</dbReference>
<dbReference type="CDD" id="cd00580">
    <property type="entry name" value="CHMI"/>
    <property type="match status" value="1"/>
</dbReference>
<dbReference type="Gene3D" id="3.30.429.10">
    <property type="entry name" value="Macrophage Migration Inhibitory Factor"/>
    <property type="match status" value="1"/>
</dbReference>
<dbReference type="InterPro" id="IPR004220">
    <property type="entry name" value="5-COMe_2-OHmuconate_Isoase"/>
</dbReference>
<dbReference type="InterPro" id="IPR014347">
    <property type="entry name" value="Tautomerase/MIF_sf"/>
</dbReference>
<dbReference type="NCBIfam" id="NF011605">
    <property type="entry name" value="PRK15031.1"/>
    <property type="match status" value="1"/>
</dbReference>
<dbReference type="PANTHER" id="PTHR37950">
    <property type="entry name" value="4-HYDROXYPHENYLACETATE CATABOLISM PROTEIN"/>
    <property type="match status" value="1"/>
</dbReference>
<dbReference type="PANTHER" id="PTHR37950:SF1">
    <property type="entry name" value="4-HYDROXYPHENYLACETATE CATABOLISM PROTEIN"/>
    <property type="match status" value="1"/>
</dbReference>
<dbReference type="Pfam" id="PF02962">
    <property type="entry name" value="CHMI"/>
    <property type="match status" value="1"/>
</dbReference>
<dbReference type="SUPFAM" id="SSF55331">
    <property type="entry name" value="Tautomerase/MIF"/>
    <property type="match status" value="1"/>
</dbReference>
<comment type="function">
    <text>Transforms 5-carboxymethyl-2-hydroxy-muconic acid (CHM) into 5-oxo-pent-3-ene-1,2,5-tricarboxylic acid (OPET).</text>
</comment>
<comment type="catalytic activity">
    <reaction evidence="1">
        <text>(2E,4Z)-5-hydroxypenta-2,4-diene-1,2,5-tricarboxylate = (3E,5R)-5-carboxy-2-oxohept-3-enedioate</text>
        <dbReference type="Rhea" id="RHEA:18813"/>
        <dbReference type="ChEBI" id="CHEBI:47961"/>
        <dbReference type="ChEBI" id="CHEBI:87491"/>
        <dbReference type="EC" id="5.3.3.10"/>
    </reaction>
</comment>
<comment type="biophysicochemical properties">
    <phDependence>
        <text evidence="1">Optimum pH is 7.6.</text>
    </phDependence>
</comment>
<comment type="pathway">
    <text>Aromatic compound metabolism; 4-hydroxyphenylacetate degradation; pyruvate and succinate semialdehyde from 4-hydroxyphenylacetate: step 4/7.</text>
</comment>
<comment type="subunit">
    <text evidence="2">Homotrimer.</text>
</comment>
<protein>
    <recommendedName>
        <fullName>5-carboxymethyl-2-hydroxymuconate Delta-isomerase</fullName>
        <ecNumber evidence="1">5.3.3.10</ecNumber>
    </recommendedName>
    <alternativeName>
        <fullName evidence="3">5-carboxymethyl-2-hydroxymuconic acid isomerase</fullName>
        <shortName evidence="3">CHM isomerase</shortName>
        <shortName>CHMI</shortName>
    </alternativeName>
</protein>